<protein>
    <recommendedName>
        <fullName evidence="2">ATP synthase subunit alpha</fullName>
        <ecNumber evidence="2">7.1.2.2</ecNumber>
    </recommendedName>
    <alternativeName>
        <fullName evidence="2">ATP synthase F1 sector subunit alpha</fullName>
    </alternativeName>
    <alternativeName>
        <fullName evidence="2">F-ATPase subunit alpha</fullName>
    </alternativeName>
</protein>
<reference key="1">
    <citation type="submission" date="2007-04" db="EMBL/GenBank/DDBJ databases">
        <title>Complete sequence of chromosome of Rhodobacter sphaeroides ATCC 17025.</title>
        <authorList>
            <consortium name="US DOE Joint Genome Institute"/>
            <person name="Copeland A."/>
            <person name="Lucas S."/>
            <person name="Lapidus A."/>
            <person name="Barry K."/>
            <person name="Detter J.C."/>
            <person name="Glavina del Rio T."/>
            <person name="Hammon N."/>
            <person name="Israni S."/>
            <person name="Dalin E."/>
            <person name="Tice H."/>
            <person name="Pitluck S."/>
            <person name="Chertkov O."/>
            <person name="Brettin T."/>
            <person name="Bruce D."/>
            <person name="Han C."/>
            <person name="Schmutz J."/>
            <person name="Larimer F."/>
            <person name="Land M."/>
            <person name="Hauser L."/>
            <person name="Kyrpides N."/>
            <person name="Kim E."/>
            <person name="Richardson P."/>
            <person name="Mackenzie C."/>
            <person name="Choudhary M."/>
            <person name="Donohue T.J."/>
            <person name="Kaplan S."/>
        </authorList>
    </citation>
    <scope>NUCLEOTIDE SEQUENCE [LARGE SCALE GENOMIC DNA]</scope>
    <source>
        <strain>ATCC 17025 / ATH 2.4.3</strain>
    </source>
</reference>
<dbReference type="EC" id="7.1.2.2" evidence="2"/>
<dbReference type="EMBL" id="CP000661">
    <property type="protein sequence ID" value="ABP71093.1"/>
    <property type="molecule type" value="Genomic_DNA"/>
</dbReference>
<dbReference type="SMR" id="A4WUM9"/>
<dbReference type="STRING" id="349102.Rsph17025_2203"/>
<dbReference type="KEGG" id="rsq:Rsph17025_2203"/>
<dbReference type="eggNOG" id="COG0056">
    <property type="taxonomic scope" value="Bacteria"/>
</dbReference>
<dbReference type="HOGENOM" id="CLU_010091_2_1_5"/>
<dbReference type="BioCyc" id="RSPH349102:G1G8M-2271-MONOMER"/>
<dbReference type="GO" id="GO:0005886">
    <property type="term" value="C:plasma membrane"/>
    <property type="evidence" value="ECO:0007669"/>
    <property type="project" value="UniProtKB-SubCell"/>
</dbReference>
<dbReference type="GO" id="GO:0045259">
    <property type="term" value="C:proton-transporting ATP synthase complex"/>
    <property type="evidence" value="ECO:0007669"/>
    <property type="project" value="UniProtKB-KW"/>
</dbReference>
<dbReference type="GO" id="GO:0043531">
    <property type="term" value="F:ADP binding"/>
    <property type="evidence" value="ECO:0007669"/>
    <property type="project" value="TreeGrafter"/>
</dbReference>
<dbReference type="GO" id="GO:0005524">
    <property type="term" value="F:ATP binding"/>
    <property type="evidence" value="ECO:0007669"/>
    <property type="project" value="UniProtKB-UniRule"/>
</dbReference>
<dbReference type="GO" id="GO:0046933">
    <property type="term" value="F:proton-transporting ATP synthase activity, rotational mechanism"/>
    <property type="evidence" value="ECO:0007669"/>
    <property type="project" value="UniProtKB-UniRule"/>
</dbReference>
<dbReference type="CDD" id="cd18113">
    <property type="entry name" value="ATP-synt_F1_alpha_C"/>
    <property type="match status" value="1"/>
</dbReference>
<dbReference type="CDD" id="cd18116">
    <property type="entry name" value="ATP-synt_F1_alpha_N"/>
    <property type="match status" value="1"/>
</dbReference>
<dbReference type="CDD" id="cd01132">
    <property type="entry name" value="F1-ATPase_alpha_CD"/>
    <property type="match status" value="1"/>
</dbReference>
<dbReference type="FunFam" id="1.20.150.20:FF:000001">
    <property type="entry name" value="ATP synthase subunit alpha"/>
    <property type="match status" value="1"/>
</dbReference>
<dbReference type="FunFam" id="2.40.30.20:FF:000001">
    <property type="entry name" value="ATP synthase subunit alpha"/>
    <property type="match status" value="1"/>
</dbReference>
<dbReference type="FunFam" id="3.40.50.300:FF:002432">
    <property type="entry name" value="ATP synthase subunit alpha, mitochondrial"/>
    <property type="match status" value="1"/>
</dbReference>
<dbReference type="Gene3D" id="2.40.30.20">
    <property type="match status" value="1"/>
</dbReference>
<dbReference type="Gene3D" id="1.20.150.20">
    <property type="entry name" value="ATP synthase alpha/beta chain, C-terminal domain"/>
    <property type="match status" value="1"/>
</dbReference>
<dbReference type="Gene3D" id="3.40.50.300">
    <property type="entry name" value="P-loop containing nucleotide triphosphate hydrolases"/>
    <property type="match status" value="1"/>
</dbReference>
<dbReference type="HAMAP" id="MF_01346">
    <property type="entry name" value="ATP_synth_alpha_bact"/>
    <property type="match status" value="1"/>
</dbReference>
<dbReference type="InterPro" id="IPR023366">
    <property type="entry name" value="ATP_synth_asu-like_sf"/>
</dbReference>
<dbReference type="InterPro" id="IPR000793">
    <property type="entry name" value="ATP_synth_asu_C"/>
</dbReference>
<dbReference type="InterPro" id="IPR038376">
    <property type="entry name" value="ATP_synth_asu_C_sf"/>
</dbReference>
<dbReference type="InterPro" id="IPR033732">
    <property type="entry name" value="ATP_synth_F1_a_nt-bd_dom"/>
</dbReference>
<dbReference type="InterPro" id="IPR005294">
    <property type="entry name" value="ATP_synth_F1_asu"/>
</dbReference>
<dbReference type="InterPro" id="IPR020003">
    <property type="entry name" value="ATPase_a/bsu_AS"/>
</dbReference>
<dbReference type="InterPro" id="IPR004100">
    <property type="entry name" value="ATPase_F1/V1/A1_a/bsu_N"/>
</dbReference>
<dbReference type="InterPro" id="IPR036121">
    <property type="entry name" value="ATPase_F1/V1/A1_a/bsu_N_sf"/>
</dbReference>
<dbReference type="InterPro" id="IPR000194">
    <property type="entry name" value="ATPase_F1/V1/A1_a/bsu_nucl-bd"/>
</dbReference>
<dbReference type="InterPro" id="IPR027417">
    <property type="entry name" value="P-loop_NTPase"/>
</dbReference>
<dbReference type="NCBIfam" id="TIGR00962">
    <property type="entry name" value="atpA"/>
    <property type="match status" value="1"/>
</dbReference>
<dbReference type="NCBIfam" id="NF009884">
    <property type="entry name" value="PRK13343.1"/>
    <property type="match status" value="1"/>
</dbReference>
<dbReference type="PANTHER" id="PTHR48082">
    <property type="entry name" value="ATP SYNTHASE SUBUNIT ALPHA, MITOCHONDRIAL"/>
    <property type="match status" value="1"/>
</dbReference>
<dbReference type="PANTHER" id="PTHR48082:SF2">
    <property type="entry name" value="ATP SYNTHASE SUBUNIT ALPHA, MITOCHONDRIAL"/>
    <property type="match status" value="1"/>
</dbReference>
<dbReference type="Pfam" id="PF00006">
    <property type="entry name" value="ATP-synt_ab"/>
    <property type="match status" value="1"/>
</dbReference>
<dbReference type="Pfam" id="PF00306">
    <property type="entry name" value="ATP-synt_ab_C"/>
    <property type="match status" value="1"/>
</dbReference>
<dbReference type="Pfam" id="PF02874">
    <property type="entry name" value="ATP-synt_ab_N"/>
    <property type="match status" value="1"/>
</dbReference>
<dbReference type="PIRSF" id="PIRSF039088">
    <property type="entry name" value="F_ATPase_subunit_alpha"/>
    <property type="match status" value="1"/>
</dbReference>
<dbReference type="SUPFAM" id="SSF47917">
    <property type="entry name" value="C-terminal domain of alpha and beta subunits of F1 ATP synthase"/>
    <property type="match status" value="1"/>
</dbReference>
<dbReference type="SUPFAM" id="SSF50615">
    <property type="entry name" value="N-terminal domain of alpha and beta subunits of F1 ATP synthase"/>
    <property type="match status" value="1"/>
</dbReference>
<dbReference type="SUPFAM" id="SSF52540">
    <property type="entry name" value="P-loop containing nucleoside triphosphate hydrolases"/>
    <property type="match status" value="1"/>
</dbReference>
<dbReference type="PROSITE" id="PS00152">
    <property type="entry name" value="ATPASE_ALPHA_BETA"/>
    <property type="match status" value="1"/>
</dbReference>
<feature type="chain" id="PRO_1000055075" description="ATP synthase subunit alpha">
    <location>
        <begin position="1"/>
        <end position="512"/>
    </location>
</feature>
<feature type="binding site" evidence="2">
    <location>
        <begin position="169"/>
        <end position="176"/>
    </location>
    <ligand>
        <name>ATP</name>
        <dbReference type="ChEBI" id="CHEBI:30616"/>
    </ligand>
</feature>
<feature type="site" description="Required for activity" evidence="2">
    <location>
        <position position="372"/>
    </location>
</feature>
<organism>
    <name type="scientific">Cereibacter sphaeroides (strain ATCC 17025 / ATH 2.4.3)</name>
    <name type="common">Rhodobacter sphaeroides</name>
    <dbReference type="NCBI Taxonomy" id="349102"/>
    <lineage>
        <taxon>Bacteria</taxon>
        <taxon>Pseudomonadati</taxon>
        <taxon>Pseudomonadota</taxon>
        <taxon>Alphaproteobacteria</taxon>
        <taxon>Rhodobacterales</taxon>
        <taxon>Paracoccaceae</taxon>
        <taxon>Cereibacter</taxon>
    </lineage>
</organism>
<comment type="function">
    <text evidence="2">Produces ATP from ADP in the presence of a proton gradient across the membrane. The alpha chain is a regulatory subunit.</text>
</comment>
<comment type="catalytic activity">
    <reaction evidence="2">
        <text>ATP + H2O + 4 H(+)(in) = ADP + phosphate + 5 H(+)(out)</text>
        <dbReference type="Rhea" id="RHEA:57720"/>
        <dbReference type="ChEBI" id="CHEBI:15377"/>
        <dbReference type="ChEBI" id="CHEBI:15378"/>
        <dbReference type="ChEBI" id="CHEBI:30616"/>
        <dbReference type="ChEBI" id="CHEBI:43474"/>
        <dbReference type="ChEBI" id="CHEBI:456216"/>
        <dbReference type="EC" id="7.1.2.2"/>
    </reaction>
</comment>
<comment type="subunit">
    <text evidence="1">F-type ATPases have 2 components, CF(1) - the catalytic core - and CF(0) - the membrane proton channel. CF(1) has five subunits: alpha(3), beta(3), gamma(1), delta(1), epsilon(1). CF(0) has four main subunits: a(1), b(1), b'(1) and c(9-12) (By similarity).</text>
</comment>
<comment type="subcellular location">
    <subcellularLocation>
        <location evidence="2">Cell inner membrane</location>
        <topology evidence="2">Peripheral membrane protein</topology>
    </subcellularLocation>
</comment>
<comment type="similarity">
    <text evidence="2">Belongs to the ATPase alpha/beta chains family.</text>
</comment>
<proteinExistence type="inferred from homology"/>
<keyword id="KW-0066">ATP synthesis</keyword>
<keyword id="KW-0067">ATP-binding</keyword>
<keyword id="KW-0997">Cell inner membrane</keyword>
<keyword id="KW-1003">Cell membrane</keyword>
<keyword id="KW-0139">CF(1)</keyword>
<keyword id="KW-0375">Hydrogen ion transport</keyword>
<keyword id="KW-0406">Ion transport</keyword>
<keyword id="KW-0472">Membrane</keyword>
<keyword id="KW-0547">Nucleotide-binding</keyword>
<keyword id="KW-1278">Translocase</keyword>
<keyword id="KW-0813">Transport</keyword>
<accession>A4WUM9</accession>
<name>ATPA_CERS5</name>
<gene>
    <name evidence="2" type="primary">atpA</name>
    <name type="ordered locus">Rsph17025_2203</name>
</gene>
<sequence>MGIQAAEISAILKEQIKNFGQAAEVAEVGRVLSVGDGIARVHGLDNVQAGEMVEFPGGIRGMALNLEVDNVGVVIFGDDRSIKEGDTVKRTKSIVDVPAGDALLGRVVDGLGNPIDGKGPIAATERRVADVKAPGIIPRKGVHEPMATGLKSVDAMIPIGRGQRELIIGDRQTGKTAIALDTILNQKSYNEAAGDDESKKLYCIYVAIGQKRSTVAQLVKKLEETGAIAYTLVVAATASDPAPMQFLAPYAATAMAEYFRDNGRHALIIYDDLSKQAVAYRQMSLLLRRPPGREAYPGDVFYLHSRLLERSAKLNKEHGSGSLTALPIIETQGGDVSAFIPTNVISITDGQIFLETELFYQGIRPAVNTGLSVSRVGSSAQTDAMKSVAGPVKLELAQYREMAAFAQFGSDLDAATQQLLNRGARLTELMKQPQYAPLTNAEIVCVIFAGTKGYLDKVPVKDVGRWEQGLLKHLRTNARDLLADITNNDRKVKGELENKIRAALDTYAKDFA</sequence>
<evidence type="ECO:0000250" key="1"/>
<evidence type="ECO:0000255" key="2">
    <source>
        <dbReference type="HAMAP-Rule" id="MF_01346"/>
    </source>
</evidence>